<geneLocation type="chloroplast"/>
<feature type="chain" id="PRO_0000277110" description="Photosystem I P700 chlorophyll a apoprotein A2">
    <location>
        <begin position="1"/>
        <end position="734"/>
    </location>
</feature>
<feature type="transmembrane region" description="Helical; Name=I" evidence="1">
    <location>
        <begin position="46"/>
        <end position="69"/>
    </location>
</feature>
<feature type="transmembrane region" description="Helical; Name=II" evidence="1">
    <location>
        <begin position="135"/>
        <end position="158"/>
    </location>
</feature>
<feature type="transmembrane region" description="Helical; Name=III" evidence="1">
    <location>
        <begin position="175"/>
        <end position="199"/>
    </location>
</feature>
<feature type="transmembrane region" description="Helical; Name=IV" evidence="1">
    <location>
        <begin position="273"/>
        <end position="291"/>
    </location>
</feature>
<feature type="transmembrane region" description="Helical; Name=V" evidence="1">
    <location>
        <begin position="330"/>
        <end position="353"/>
    </location>
</feature>
<feature type="transmembrane region" description="Helical; Name=VI" evidence="1">
    <location>
        <begin position="369"/>
        <end position="395"/>
    </location>
</feature>
<feature type="transmembrane region" description="Helical; Name=VII" evidence="1">
    <location>
        <begin position="417"/>
        <end position="439"/>
    </location>
</feature>
<feature type="transmembrane region" description="Helical; Name=VIII" evidence="1">
    <location>
        <begin position="517"/>
        <end position="535"/>
    </location>
</feature>
<feature type="transmembrane region" description="Helical; Name=IX" evidence="1">
    <location>
        <begin position="575"/>
        <end position="596"/>
    </location>
</feature>
<feature type="transmembrane region" description="Helical; Name=X" evidence="1">
    <location>
        <begin position="643"/>
        <end position="665"/>
    </location>
</feature>
<feature type="transmembrane region" description="Helical; Name=XI" evidence="1">
    <location>
        <begin position="707"/>
        <end position="727"/>
    </location>
</feature>
<feature type="binding site" evidence="1">
    <location>
        <position position="559"/>
    </location>
    <ligand>
        <name>[4Fe-4S] cluster</name>
        <dbReference type="ChEBI" id="CHEBI:49883"/>
        <note>ligand shared between dimeric partners</note>
    </ligand>
</feature>
<feature type="binding site" evidence="1">
    <location>
        <position position="568"/>
    </location>
    <ligand>
        <name>[4Fe-4S] cluster</name>
        <dbReference type="ChEBI" id="CHEBI:49883"/>
        <note>ligand shared between dimeric partners</note>
    </ligand>
</feature>
<feature type="binding site" description="axial binding residue" evidence="1">
    <location>
        <position position="654"/>
    </location>
    <ligand>
        <name>chlorophyll a</name>
        <dbReference type="ChEBI" id="CHEBI:58416"/>
        <label>B1</label>
    </ligand>
    <ligandPart>
        <name>Mg</name>
        <dbReference type="ChEBI" id="CHEBI:25107"/>
    </ligandPart>
</feature>
<feature type="binding site" description="axial binding residue" evidence="1">
    <location>
        <position position="662"/>
    </location>
    <ligand>
        <name>chlorophyll a</name>
        <dbReference type="ChEBI" id="CHEBI:58416"/>
        <label>B3</label>
    </ligand>
    <ligandPart>
        <name>Mg</name>
        <dbReference type="ChEBI" id="CHEBI:25107"/>
    </ligandPart>
</feature>
<feature type="binding site" evidence="1">
    <location>
        <position position="670"/>
    </location>
    <ligand>
        <name>chlorophyll a</name>
        <dbReference type="ChEBI" id="CHEBI:58416"/>
        <label>B3</label>
    </ligand>
</feature>
<feature type="binding site" evidence="1">
    <location>
        <position position="671"/>
    </location>
    <ligand>
        <name>phylloquinone</name>
        <dbReference type="ChEBI" id="CHEBI:18067"/>
        <label>B</label>
    </ligand>
</feature>
<proteinExistence type="inferred from homology"/>
<gene>
    <name evidence="1" type="primary">psaB</name>
    <name type="ordered locus">CsCp033</name>
</gene>
<comment type="function">
    <text evidence="1">PsaA and PsaB bind P700, the primary electron donor of photosystem I (PSI), as well as the electron acceptors A0, A1 and FX. PSI is a plastocyanin-ferredoxin oxidoreductase, converting photonic excitation into a charge separation, which transfers an electron from the donor P700 chlorophyll pair to the spectroscopically characterized acceptors A0, A1, FX, FA and FB in turn. Oxidized P700 is reduced on the lumenal side of the thylakoid membrane by plastocyanin.</text>
</comment>
<comment type="catalytic activity">
    <reaction evidence="1">
        <text>reduced [plastocyanin] + hnu + oxidized [2Fe-2S]-[ferredoxin] = oxidized [plastocyanin] + reduced [2Fe-2S]-[ferredoxin]</text>
        <dbReference type="Rhea" id="RHEA:30407"/>
        <dbReference type="Rhea" id="RHEA-COMP:10000"/>
        <dbReference type="Rhea" id="RHEA-COMP:10001"/>
        <dbReference type="Rhea" id="RHEA-COMP:10039"/>
        <dbReference type="Rhea" id="RHEA-COMP:10040"/>
        <dbReference type="ChEBI" id="CHEBI:29036"/>
        <dbReference type="ChEBI" id="CHEBI:30212"/>
        <dbReference type="ChEBI" id="CHEBI:33737"/>
        <dbReference type="ChEBI" id="CHEBI:33738"/>
        <dbReference type="ChEBI" id="CHEBI:49552"/>
        <dbReference type="EC" id="1.97.1.12"/>
    </reaction>
</comment>
<comment type="cofactor">
    <text evidence="1">P700 is a chlorophyll a/chlorophyll a' dimer, A0 is one or more chlorophyll a, A1 is one or both phylloquinones and FX is a shared 4Fe-4S iron-sulfur center.</text>
</comment>
<comment type="subunit">
    <text evidence="1">The PsaA/B heterodimer binds the P700 chlorophyll special pair and subsequent electron acceptors. PSI consists of a core antenna complex that captures photons, and an electron transfer chain that converts photonic excitation into a charge separation. The eukaryotic PSI reaction center is composed of at least 11 subunits.</text>
</comment>
<comment type="subcellular location">
    <subcellularLocation>
        <location>Plastid</location>
        <location>Chloroplast thylakoid membrane</location>
        <topology>Multi-pass membrane protein</topology>
    </subcellularLocation>
</comment>
<comment type="similarity">
    <text evidence="1">Belongs to the PsaA/PsaB family.</text>
</comment>
<keyword id="KW-0004">4Fe-4S</keyword>
<keyword id="KW-0148">Chlorophyll</keyword>
<keyword id="KW-0150">Chloroplast</keyword>
<keyword id="KW-0157">Chromophore</keyword>
<keyword id="KW-0249">Electron transport</keyword>
<keyword id="KW-0408">Iron</keyword>
<keyword id="KW-0411">Iron-sulfur</keyword>
<keyword id="KW-0460">Magnesium</keyword>
<keyword id="KW-0472">Membrane</keyword>
<keyword id="KW-0479">Metal-binding</keyword>
<keyword id="KW-0560">Oxidoreductase</keyword>
<keyword id="KW-0602">Photosynthesis</keyword>
<keyword id="KW-0603">Photosystem I</keyword>
<keyword id="KW-0934">Plastid</keyword>
<keyword id="KW-0793">Thylakoid</keyword>
<keyword id="KW-0812">Transmembrane</keyword>
<keyword id="KW-1133">Transmembrane helix</keyword>
<keyword id="KW-0813">Transport</keyword>
<sequence length="734" mass="82300">MALRFPRFSQGLAQDPTTRRIWFGIATAHDFESHDDITEERLYQNIFASHFGQLAIIFLWTSGNLFHVAWQGNFEAWVQDPLHVRPIAHAIWDPHFGQPAVEAFTRGGALGPVNIAYSGVYQWWYTIGLRTNGDLYTGALFLLFLSAISLIAGWLHLQPKWKPSVSWFKNAESRLNHHLSGLFGVSSLAWTGHLVHVAIPASRGESVRWNNFLDVLPHPQGLGPLFTGQWNLYAQNPDSNNHLFGTSEGAGTAILTLLGGFHPQTQSLWLTDMAHHHLAIAFIFLVAGHMYRTNFGIGHSIKDLLEAHIPPGGRLGRGHKGLYDTINNSLHFQLGLALASLGVITSLVAQHMYALPAYAFIAQDFTTQAALYTHHQYIAGFIMTGAFAHGAIFFIRDYNPEQNEDNVLARMLDHKEAIISHLSWASLFLGFHTLGLYVHNDVMLAFGTPEKQILIEPIFAQWIQSAHGKTSYGFDVLLSSTSGPAFNAGRSIWLPGWLNAVNENSNSLFLTIGPGDFLVHHAIALGLHTTTLILVKGALDARGSKLMPDKKDFGYSFPCDGPGRGGTCDISAWDAFYLAVFWMLNTIGWVTFYWHWKHITLWQGNVSQFNESSTYLMGWLRDYLWLNSSQLINGYNPFGMNSLSVWAWMFLFGHLVWATGFMFLISWRGYWQELIETLAWAHERTPLANLIRWRDKPVALSIVQARLVGLAHFSVGYIFTYAAFLIASTSGKFG</sequence>
<protein>
    <recommendedName>
        <fullName evidence="1">Photosystem I P700 chlorophyll a apoprotein A2</fullName>
        <ecNumber evidence="1">1.97.1.12</ecNumber>
    </recommendedName>
    <alternativeName>
        <fullName evidence="1">PSI-B</fullName>
    </alternativeName>
    <alternativeName>
        <fullName evidence="1">PsaB</fullName>
    </alternativeName>
</protein>
<accession>Q4VZN4</accession>
<accession>A5J1T3</accession>
<organism>
    <name type="scientific">Cucumis sativus</name>
    <name type="common">Cucumber</name>
    <dbReference type="NCBI Taxonomy" id="3659"/>
    <lineage>
        <taxon>Eukaryota</taxon>
        <taxon>Viridiplantae</taxon>
        <taxon>Streptophyta</taxon>
        <taxon>Embryophyta</taxon>
        <taxon>Tracheophyta</taxon>
        <taxon>Spermatophyta</taxon>
        <taxon>Magnoliopsida</taxon>
        <taxon>eudicotyledons</taxon>
        <taxon>Gunneridae</taxon>
        <taxon>Pentapetalae</taxon>
        <taxon>rosids</taxon>
        <taxon>fabids</taxon>
        <taxon>Cucurbitales</taxon>
        <taxon>Cucurbitaceae</taxon>
        <taxon>Benincaseae</taxon>
        <taxon>Cucumis</taxon>
    </lineage>
</organism>
<name>PSAB_CUCSA</name>
<reference key="1">
    <citation type="journal article" date="2006" name="Plant Cell Rep.">
        <title>Complete sequence and organization of the cucumber (Cucumis sativus L. cv. Baekmibaekdadagi) chloroplast genome.</title>
        <authorList>
            <person name="Kim J.-S."/>
            <person name="Jung J.D."/>
            <person name="Lee J.-A."/>
            <person name="Park H.-W."/>
            <person name="Oh K.-H."/>
            <person name="Jeong W.J."/>
            <person name="Choi D.-W."/>
            <person name="Liu J.R."/>
            <person name="Cho K.Y."/>
        </authorList>
    </citation>
    <scope>NUCLEOTIDE SEQUENCE [LARGE SCALE GENOMIC DNA]</scope>
    <source>
        <strain>cv. Baekmibaekdadagi</strain>
    </source>
</reference>
<reference key="2">
    <citation type="journal article" date="2007" name="Cell. Mol. Biol. Lett.">
        <title>The complete structure of the cucumber (Cucumis sativus L.) chloroplast genome: its composition and comparative analysis.</title>
        <authorList>
            <person name="Plader W.W."/>
            <person name="Yukawa Y."/>
            <person name="Sugiura M."/>
            <person name="Malepszy S."/>
        </authorList>
    </citation>
    <scope>NUCLEOTIDE SEQUENCE [LARGE SCALE GENOMIC DNA]</scope>
    <source>
        <strain>cv. Borszczagowski</strain>
    </source>
</reference>
<reference key="3">
    <citation type="journal article" date="2007" name="Genome">
        <title>Sequencing cucumber (Cucumis sativus L.) chloroplast genomes identifies differences between chilling-tolerant and -susceptible cucumber lines.</title>
        <authorList>
            <person name="Chung S.-M."/>
            <person name="Gordon V.S."/>
            <person name="Staub J.E."/>
        </authorList>
    </citation>
    <scope>NUCLEOTIDE SEQUENCE [LARGE SCALE GENOMIC DNA]</scope>
    <source>
        <strain>cv. Chipper</strain>
        <strain>cv. Gy14</strain>
    </source>
</reference>
<evidence type="ECO:0000255" key="1">
    <source>
        <dbReference type="HAMAP-Rule" id="MF_00482"/>
    </source>
</evidence>
<dbReference type="EC" id="1.97.1.12" evidence="1"/>
<dbReference type="EMBL" id="DQ119058">
    <property type="protein sequence ID" value="AAZ94650.1"/>
    <property type="molecule type" value="Genomic_DNA"/>
</dbReference>
<dbReference type="EMBL" id="AJ970307">
    <property type="protein sequence ID" value="CAJ00757.1"/>
    <property type="molecule type" value="Genomic_DNA"/>
</dbReference>
<dbReference type="EMBL" id="DQ865975">
    <property type="protein sequence ID" value="ABI97416.1"/>
    <property type="molecule type" value="Genomic_DNA"/>
</dbReference>
<dbReference type="EMBL" id="DQ865976">
    <property type="protein sequence ID" value="ABI98745.1"/>
    <property type="molecule type" value="Genomic_DNA"/>
</dbReference>
<dbReference type="RefSeq" id="YP_247598.1">
    <property type="nucleotide sequence ID" value="NC_007144.1"/>
</dbReference>
<dbReference type="SMR" id="Q4VZN4"/>
<dbReference type="GeneID" id="3429271"/>
<dbReference type="KEGG" id="csv:3429271"/>
<dbReference type="OrthoDB" id="349at2759"/>
<dbReference type="GO" id="GO:0009535">
    <property type="term" value="C:chloroplast thylakoid membrane"/>
    <property type="evidence" value="ECO:0007669"/>
    <property type="project" value="UniProtKB-SubCell"/>
</dbReference>
<dbReference type="GO" id="GO:0009522">
    <property type="term" value="C:photosystem I"/>
    <property type="evidence" value="ECO:0007669"/>
    <property type="project" value="UniProtKB-KW"/>
</dbReference>
<dbReference type="GO" id="GO:0051539">
    <property type="term" value="F:4 iron, 4 sulfur cluster binding"/>
    <property type="evidence" value="ECO:0007669"/>
    <property type="project" value="UniProtKB-KW"/>
</dbReference>
<dbReference type="GO" id="GO:0016168">
    <property type="term" value="F:chlorophyll binding"/>
    <property type="evidence" value="ECO:0007669"/>
    <property type="project" value="UniProtKB-KW"/>
</dbReference>
<dbReference type="GO" id="GO:0009055">
    <property type="term" value="F:electron transfer activity"/>
    <property type="evidence" value="ECO:0007669"/>
    <property type="project" value="UniProtKB-UniRule"/>
</dbReference>
<dbReference type="GO" id="GO:0000287">
    <property type="term" value="F:magnesium ion binding"/>
    <property type="evidence" value="ECO:0007669"/>
    <property type="project" value="UniProtKB-UniRule"/>
</dbReference>
<dbReference type="GO" id="GO:0016491">
    <property type="term" value="F:oxidoreductase activity"/>
    <property type="evidence" value="ECO:0007669"/>
    <property type="project" value="UniProtKB-KW"/>
</dbReference>
<dbReference type="GO" id="GO:0015979">
    <property type="term" value="P:photosynthesis"/>
    <property type="evidence" value="ECO:0007669"/>
    <property type="project" value="UniProtKB-UniRule"/>
</dbReference>
<dbReference type="FunFam" id="1.20.1130.10:FF:000001">
    <property type="entry name" value="Photosystem I P700 chlorophyll a apoprotein A2"/>
    <property type="match status" value="1"/>
</dbReference>
<dbReference type="Gene3D" id="1.20.1130.10">
    <property type="entry name" value="Photosystem I PsaA/PsaB"/>
    <property type="match status" value="1"/>
</dbReference>
<dbReference type="HAMAP" id="MF_00482">
    <property type="entry name" value="PSI_PsaB"/>
    <property type="match status" value="1"/>
</dbReference>
<dbReference type="InterPro" id="IPR001280">
    <property type="entry name" value="PSI_PsaA/B"/>
</dbReference>
<dbReference type="InterPro" id="IPR020586">
    <property type="entry name" value="PSI_PsaA/B_CS"/>
</dbReference>
<dbReference type="InterPro" id="IPR036408">
    <property type="entry name" value="PSI_PsaA/B_sf"/>
</dbReference>
<dbReference type="InterPro" id="IPR006244">
    <property type="entry name" value="PSI_PsaB"/>
</dbReference>
<dbReference type="NCBIfam" id="TIGR01336">
    <property type="entry name" value="psaB"/>
    <property type="match status" value="1"/>
</dbReference>
<dbReference type="PANTHER" id="PTHR30128">
    <property type="entry name" value="OUTER MEMBRANE PROTEIN, OMPA-RELATED"/>
    <property type="match status" value="1"/>
</dbReference>
<dbReference type="PANTHER" id="PTHR30128:SF19">
    <property type="entry name" value="PHOTOSYSTEM I P700 CHLOROPHYLL A APOPROTEIN A1-RELATED"/>
    <property type="match status" value="1"/>
</dbReference>
<dbReference type="Pfam" id="PF00223">
    <property type="entry name" value="PsaA_PsaB"/>
    <property type="match status" value="1"/>
</dbReference>
<dbReference type="PIRSF" id="PIRSF002905">
    <property type="entry name" value="PSI_A"/>
    <property type="match status" value="1"/>
</dbReference>
<dbReference type="PRINTS" id="PR00257">
    <property type="entry name" value="PHOTSYSPSAAB"/>
</dbReference>
<dbReference type="SUPFAM" id="SSF81558">
    <property type="entry name" value="Photosystem I subunits PsaA/PsaB"/>
    <property type="match status" value="1"/>
</dbReference>
<dbReference type="PROSITE" id="PS00419">
    <property type="entry name" value="PHOTOSYSTEM_I_PSAAB"/>
    <property type="match status" value="1"/>
</dbReference>